<comment type="function">
    <text>Core component of nucleosome. Nucleosomes wrap and compact DNA into chromatin, limiting DNA accessibility to the cellular machineries which require DNA as a template. Histones thereby play a central role in transcription regulation, DNA repair, DNA replication and chromosomal stability. DNA accessibility is regulated via a complex set of post-translational modifications of histones, also called histone code, and nucleosome remodeling.</text>
</comment>
<comment type="subunit">
    <text>The nucleosome is a histone octamer containing two molecules each of H2A, H2B, H3 and H4 assembled in one H3-H4 heterotetramer and two H2A-H2B heterodimers. The octamer wraps approximately 147 bp of DNA.</text>
</comment>
<comment type="subcellular location">
    <subcellularLocation>
        <location evidence="1">Nucleus</location>
    </subcellularLocation>
    <subcellularLocation>
        <location evidence="1">Chromosome</location>
    </subcellularLocation>
</comment>
<comment type="similarity">
    <text evidence="3">Belongs to the histone H4 family.</text>
</comment>
<gene>
    <name type="primary">hh4</name>
</gene>
<organism>
    <name type="scientific">Flaveria trinervia</name>
    <name type="common">Clustered yellowtops</name>
    <name type="synonym">Oedera trinervia</name>
    <dbReference type="NCBI Taxonomy" id="4227"/>
    <lineage>
        <taxon>Eukaryota</taxon>
        <taxon>Viridiplantae</taxon>
        <taxon>Streptophyta</taxon>
        <taxon>Embryophyta</taxon>
        <taxon>Tracheophyta</taxon>
        <taxon>Spermatophyta</taxon>
        <taxon>Magnoliopsida</taxon>
        <taxon>eudicotyledons</taxon>
        <taxon>Gunneridae</taxon>
        <taxon>Pentapetalae</taxon>
        <taxon>asterids</taxon>
        <taxon>campanulids</taxon>
        <taxon>Asterales</taxon>
        <taxon>Asteraceae</taxon>
        <taxon>Asteroideae</taxon>
        <taxon>Heliantheae alliance</taxon>
        <taxon>Tageteae</taxon>
        <taxon>Flaveria</taxon>
    </lineage>
</organism>
<feature type="initiator methionine" description="Removed" evidence="1">
    <location>
        <position position="1"/>
    </location>
</feature>
<feature type="chain" id="PRO_0000158318" description="Histone H4">
    <location>
        <begin position="2"/>
        <end position="103"/>
    </location>
</feature>
<feature type="DNA-binding region">
    <location>
        <begin position="17"/>
        <end position="21"/>
    </location>
</feature>
<feature type="region of interest" description="Disordered" evidence="2">
    <location>
        <begin position="1"/>
        <end position="20"/>
    </location>
</feature>
<feature type="compositionally biased region" description="Gly residues" evidence="2">
    <location>
        <begin position="1"/>
        <end position="14"/>
    </location>
</feature>
<feature type="modified residue" description="N-acetylserine" evidence="1">
    <location>
        <position position="2"/>
    </location>
</feature>
<feature type="modified residue" description="N6-acetyllysine" evidence="1">
    <location>
        <position position="17"/>
    </location>
</feature>
<feature type="modified residue" description="N6-methyllysine" evidence="1">
    <location>
        <position position="21"/>
    </location>
</feature>
<evidence type="ECO:0000250" key="1"/>
<evidence type="ECO:0000256" key="2">
    <source>
        <dbReference type="SAM" id="MobiDB-lite"/>
    </source>
</evidence>
<evidence type="ECO:0000305" key="3"/>
<reference key="1">
    <citation type="journal article" date="2001" name="Plant Mol. Biol.">
        <title>Characterization of a novel class of plant homeodomain proteins that bind to the C4 phosphoenolpyruvate carboxylase gene of Flaveria trinervia.</title>
        <authorList>
            <person name="Windhoevel A."/>
            <person name="Hein I."/>
            <person name="Dabrowa R."/>
            <person name="Stockhaus J."/>
        </authorList>
    </citation>
    <scope>NUCLEOTIDE SEQUENCE [MRNA]</scope>
    <source>
        <tissue>Leaf</tissue>
    </source>
</reference>
<dbReference type="EMBL" id="Y18575">
    <property type="protein sequence ID" value="CAC34411.1"/>
    <property type="molecule type" value="mRNA"/>
</dbReference>
<dbReference type="SMR" id="Q6LAF3"/>
<dbReference type="GO" id="GO:0000786">
    <property type="term" value="C:nucleosome"/>
    <property type="evidence" value="ECO:0007669"/>
    <property type="project" value="UniProtKB-KW"/>
</dbReference>
<dbReference type="GO" id="GO:0005634">
    <property type="term" value="C:nucleus"/>
    <property type="evidence" value="ECO:0007669"/>
    <property type="project" value="UniProtKB-SubCell"/>
</dbReference>
<dbReference type="GO" id="GO:0003677">
    <property type="term" value="F:DNA binding"/>
    <property type="evidence" value="ECO:0007669"/>
    <property type="project" value="UniProtKB-KW"/>
</dbReference>
<dbReference type="GO" id="GO:0046982">
    <property type="term" value="F:protein heterodimerization activity"/>
    <property type="evidence" value="ECO:0007669"/>
    <property type="project" value="InterPro"/>
</dbReference>
<dbReference type="GO" id="GO:0030527">
    <property type="term" value="F:structural constituent of chromatin"/>
    <property type="evidence" value="ECO:0007669"/>
    <property type="project" value="InterPro"/>
</dbReference>
<dbReference type="CDD" id="cd22912">
    <property type="entry name" value="HFD_H4"/>
    <property type="match status" value="1"/>
</dbReference>
<dbReference type="FunFam" id="1.10.20.10:FF:000002">
    <property type="entry name" value="Histone H4"/>
    <property type="match status" value="1"/>
</dbReference>
<dbReference type="Gene3D" id="1.10.20.10">
    <property type="entry name" value="Histone, subunit A"/>
    <property type="match status" value="1"/>
</dbReference>
<dbReference type="InterPro" id="IPR035425">
    <property type="entry name" value="CENP-T/H4_C"/>
</dbReference>
<dbReference type="InterPro" id="IPR009072">
    <property type="entry name" value="Histone-fold"/>
</dbReference>
<dbReference type="InterPro" id="IPR001951">
    <property type="entry name" value="Histone_H4"/>
</dbReference>
<dbReference type="InterPro" id="IPR019809">
    <property type="entry name" value="Histone_H4_CS"/>
</dbReference>
<dbReference type="PANTHER" id="PTHR10484">
    <property type="entry name" value="HISTONE H4"/>
    <property type="match status" value="1"/>
</dbReference>
<dbReference type="Pfam" id="PF15511">
    <property type="entry name" value="CENP-T_C"/>
    <property type="match status" value="1"/>
</dbReference>
<dbReference type="PRINTS" id="PR00623">
    <property type="entry name" value="HISTONEH4"/>
</dbReference>
<dbReference type="SMART" id="SM00417">
    <property type="entry name" value="H4"/>
    <property type="match status" value="1"/>
</dbReference>
<dbReference type="SUPFAM" id="SSF47113">
    <property type="entry name" value="Histone-fold"/>
    <property type="match status" value="1"/>
</dbReference>
<dbReference type="PROSITE" id="PS00047">
    <property type="entry name" value="HISTONE_H4"/>
    <property type="match status" value="1"/>
</dbReference>
<keyword id="KW-0007">Acetylation</keyword>
<keyword id="KW-0158">Chromosome</keyword>
<keyword id="KW-0238">DNA-binding</keyword>
<keyword id="KW-0488">Methylation</keyword>
<keyword id="KW-0544">Nucleosome core</keyword>
<keyword id="KW-0539">Nucleus</keyword>
<name>H4_FLATR</name>
<accession>Q6LAF3</accession>
<protein>
    <recommendedName>
        <fullName>Histone H4</fullName>
    </recommendedName>
</protein>
<proteinExistence type="inferred from homology"/>
<sequence length="103" mass="11409">MSGRGKGGKGLGKGGAKRHRKVLRDNIQGITKPAIRRLARRGGVKRISGLIYEETRGVLKIFLENVIRDAVTYTEHARRKTVTAMDVVYALKRQGRTLYGFGG</sequence>